<reference key="1">
    <citation type="journal article" date="2003" name="Proc. Natl. Acad. Sci. U.S.A.">
        <title>The complete genome sequence of the Arabidopsis and tomato pathogen Pseudomonas syringae pv. tomato DC3000.</title>
        <authorList>
            <person name="Buell C.R."/>
            <person name="Joardar V."/>
            <person name="Lindeberg M."/>
            <person name="Selengut J."/>
            <person name="Paulsen I.T."/>
            <person name="Gwinn M.L."/>
            <person name="Dodson R.J."/>
            <person name="DeBoy R.T."/>
            <person name="Durkin A.S."/>
            <person name="Kolonay J.F."/>
            <person name="Madupu R."/>
            <person name="Daugherty S.C."/>
            <person name="Brinkac L.M."/>
            <person name="Beanan M.J."/>
            <person name="Haft D.H."/>
            <person name="Nelson W.C."/>
            <person name="Davidsen T.M."/>
            <person name="Zafar N."/>
            <person name="Zhou L."/>
            <person name="Liu J."/>
            <person name="Yuan Q."/>
            <person name="Khouri H.M."/>
            <person name="Fedorova N.B."/>
            <person name="Tran B."/>
            <person name="Russell D."/>
            <person name="Berry K.J."/>
            <person name="Utterback T.R."/>
            <person name="Van Aken S.E."/>
            <person name="Feldblyum T.V."/>
            <person name="D'Ascenzo M."/>
            <person name="Deng W.-L."/>
            <person name="Ramos A.R."/>
            <person name="Alfano J.R."/>
            <person name="Cartinhour S."/>
            <person name="Chatterjee A.K."/>
            <person name="Delaney T.P."/>
            <person name="Lazarowitz S.G."/>
            <person name="Martin G.B."/>
            <person name="Schneider D.J."/>
            <person name="Tang X."/>
            <person name="Bender C.L."/>
            <person name="White O."/>
            <person name="Fraser C.M."/>
            <person name="Collmer A."/>
        </authorList>
    </citation>
    <scope>NUCLEOTIDE SEQUENCE [LARGE SCALE GENOMIC DNA]</scope>
    <source>
        <strain>ATCC BAA-871 / DC3000</strain>
    </source>
</reference>
<accession>Q888C1</accession>
<organism>
    <name type="scientific">Pseudomonas syringae pv. tomato (strain ATCC BAA-871 / DC3000)</name>
    <dbReference type="NCBI Taxonomy" id="223283"/>
    <lineage>
        <taxon>Bacteria</taxon>
        <taxon>Pseudomonadati</taxon>
        <taxon>Pseudomonadota</taxon>
        <taxon>Gammaproteobacteria</taxon>
        <taxon>Pseudomonadales</taxon>
        <taxon>Pseudomonadaceae</taxon>
        <taxon>Pseudomonas</taxon>
    </lineage>
</organism>
<evidence type="ECO:0000255" key="1">
    <source>
        <dbReference type="HAMAP-Rule" id="MF_00093"/>
    </source>
</evidence>
<protein>
    <recommendedName>
        <fullName evidence="1">Peptide chain release factor 1</fullName>
        <shortName evidence="1">RF-1</shortName>
    </recommendedName>
</protein>
<name>RF1_PSESM</name>
<sequence>MKASLLNKLDVLSDRFEELTALLGDAEVISDQTRFRAYSREYAEVEPVVALYKQLARVQGDLEGAQALLKDSDPDMREMAVEEVRETKQQLVELEAQLQRMLLPKDPNDGRNVFLEIRAGTGGDEAAIFSGDLFRMYSRYAERRGWRVEILSENEGEHGGYKEVIARVEGDSVYGKLKFESGAHRVQRVPKTESQGRIHTSACTVAVLPEPDEQQAIEINPADLRVDTYRSSGAGGQHVNKTDSAIRITHLPSGIVVECQEERSQHKNRARAMSWLSAKLNDQQTSAAASAIASERKLLVGSGDRSERIRTYNFPQGRVTDHRVNLTLYSLDEVLAGGVDAVIEPLLAEYQADQLAALGE</sequence>
<keyword id="KW-0963">Cytoplasm</keyword>
<keyword id="KW-0488">Methylation</keyword>
<keyword id="KW-0648">Protein biosynthesis</keyword>
<keyword id="KW-1185">Reference proteome</keyword>
<proteinExistence type="inferred from homology"/>
<comment type="function">
    <text evidence="1">Peptide chain release factor 1 directs the termination of translation in response to the peptide chain termination codons UAG and UAA.</text>
</comment>
<comment type="subcellular location">
    <subcellularLocation>
        <location evidence="1">Cytoplasm</location>
    </subcellularLocation>
</comment>
<comment type="PTM">
    <text evidence="1">Methylated by PrmC. Methylation increases the termination efficiency of RF1.</text>
</comment>
<comment type="similarity">
    <text evidence="1">Belongs to the prokaryotic/mitochondrial release factor family.</text>
</comment>
<gene>
    <name evidence="1" type="primary">prfA</name>
    <name type="ordered locus">PSPTO_1109</name>
</gene>
<dbReference type="EMBL" id="AE016853">
    <property type="protein sequence ID" value="AAO54638.1"/>
    <property type="molecule type" value="Genomic_DNA"/>
</dbReference>
<dbReference type="RefSeq" id="NP_790943.1">
    <property type="nucleotide sequence ID" value="NC_004578.1"/>
</dbReference>
<dbReference type="RefSeq" id="WP_011103430.1">
    <property type="nucleotide sequence ID" value="NC_004578.1"/>
</dbReference>
<dbReference type="SMR" id="Q888C1"/>
<dbReference type="STRING" id="223283.PSPTO_1109"/>
<dbReference type="GeneID" id="1182745"/>
<dbReference type="KEGG" id="pst:PSPTO_1109"/>
<dbReference type="PATRIC" id="fig|223283.9.peg.1119"/>
<dbReference type="eggNOG" id="COG0216">
    <property type="taxonomic scope" value="Bacteria"/>
</dbReference>
<dbReference type="HOGENOM" id="CLU_036856_0_1_6"/>
<dbReference type="OrthoDB" id="9806673at2"/>
<dbReference type="PhylomeDB" id="Q888C1"/>
<dbReference type="Proteomes" id="UP000002515">
    <property type="component" value="Chromosome"/>
</dbReference>
<dbReference type="GO" id="GO:0005737">
    <property type="term" value="C:cytoplasm"/>
    <property type="evidence" value="ECO:0007669"/>
    <property type="project" value="UniProtKB-SubCell"/>
</dbReference>
<dbReference type="GO" id="GO:0016149">
    <property type="term" value="F:translation release factor activity, codon specific"/>
    <property type="evidence" value="ECO:0007669"/>
    <property type="project" value="UniProtKB-UniRule"/>
</dbReference>
<dbReference type="FunFam" id="3.30.160.20:FF:000004">
    <property type="entry name" value="Peptide chain release factor 1"/>
    <property type="match status" value="1"/>
</dbReference>
<dbReference type="FunFam" id="3.30.70.1660:FF:000002">
    <property type="entry name" value="Peptide chain release factor 1"/>
    <property type="match status" value="1"/>
</dbReference>
<dbReference type="FunFam" id="3.30.70.1660:FF:000004">
    <property type="entry name" value="Peptide chain release factor 1"/>
    <property type="match status" value="1"/>
</dbReference>
<dbReference type="Gene3D" id="3.30.160.20">
    <property type="match status" value="1"/>
</dbReference>
<dbReference type="Gene3D" id="3.30.70.1660">
    <property type="match status" value="1"/>
</dbReference>
<dbReference type="Gene3D" id="6.10.140.1950">
    <property type="match status" value="1"/>
</dbReference>
<dbReference type="HAMAP" id="MF_00093">
    <property type="entry name" value="Rel_fac_1"/>
    <property type="match status" value="1"/>
</dbReference>
<dbReference type="InterPro" id="IPR005139">
    <property type="entry name" value="PCRF"/>
</dbReference>
<dbReference type="InterPro" id="IPR000352">
    <property type="entry name" value="Pep_chain_release_fac_I"/>
</dbReference>
<dbReference type="InterPro" id="IPR045853">
    <property type="entry name" value="Pep_chain_release_fac_I_sf"/>
</dbReference>
<dbReference type="InterPro" id="IPR050057">
    <property type="entry name" value="Prokaryotic/Mito_RF"/>
</dbReference>
<dbReference type="InterPro" id="IPR004373">
    <property type="entry name" value="RF-1"/>
</dbReference>
<dbReference type="NCBIfam" id="TIGR00019">
    <property type="entry name" value="prfA"/>
    <property type="match status" value="1"/>
</dbReference>
<dbReference type="NCBIfam" id="NF001859">
    <property type="entry name" value="PRK00591.1"/>
    <property type="match status" value="1"/>
</dbReference>
<dbReference type="PANTHER" id="PTHR43804">
    <property type="entry name" value="LD18447P"/>
    <property type="match status" value="1"/>
</dbReference>
<dbReference type="PANTHER" id="PTHR43804:SF7">
    <property type="entry name" value="LD18447P"/>
    <property type="match status" value="1"/>
</dbReference>
<dbReference type="Pfam" id="PF03462">
    <property type="entry name" value="PCRF"/>
    <property type="match status" value="1"/>
</dbReference>
<dbReference type="Pfam" id="PF00472">
    <property type="entry name" value="RF-1"/>
    <property type="match status" value="1"/>
</dbReference>
<dbReference type="SMART" id="SM00937">
    <property type="entry name" value="PCRF"/>
    <property type="match status" value="1"/>
</dbReference>
<dbReference type="SUPFAM" id="SSF75620">
    <property type="entry name" value="Release factor"/>
    <property type="match status" value="1"/>
</dbReference>
<dbReference type="PROSITE" id="PS00745">
    <property type="entry name" value="RF_PROK_I"/>
    <property type="match status" value="1"/>
</dbReference>
<feature type="chain" id="PRO_0000177725" description="Peptide chain release factor 1">
    <location>
        <begin position="1"/>
        <end position="360"/>
    </location>
</feature>
<feature type="modified residue" description="N5-methylglutamine" evidence="1">
    <location>
        <position position="237"/>
    </location>
</feature>